<proteinExistence type="evidence at protein level"/>
<evidence type="ECO:0000250" key="1">
    <source>
        <dbReference type="UniProtKB" id="O55135"/>
    </source>
</evidence>
<evidence type="ECO:0000255" key="2">
    <source>
        <dbReference type="HAMAP-Rule" id="MF_03132"/>
    </source>
</evidence>
<evidence type="ECO:0000269" key="3">
    <source>
    </source>
</evidence>
<evidence type="ECO:0000269" key="4">
    <source>
    </source>
</evidence>
<evidence type="ECO:0000269" key="5">
    <source>
    </source>
</evidence>
<evidence type="ECO:0000269" key="6">
    <source>
    </source>
</evidence>
<evidence type="ECO:0000269" key="7">
    <source>
    </source>
</evidence>
<evidence type="ECO:0000269" key="8">
    <source>
    </source>
</evidence>
<evidence type="ECO:0000269" key="9">
    <source>
    </source>
</evidence>
<evidence type="ECO:0000269" key="10">
    <source>
    </source>
</evidence>
<evidence type="ECO:0000305" key="11"/>
<evidence type="ECO:0000312" key="12">
    <source>
        <dbReference type="HGNC" id="HGNC:6159"/>
    </source>
</evidence>
<evidence type="ECO:0007744" key="13">
    <source>
        <dbReference type="PDB" id="6LQM"/>
    </source>
</evidence>
<evidence type="ECO:0007744" key="14">
    <source>
        <dbReference type="PDB" id="6LSR"/>
    </source>
</evidence>
<evidence type="ECO:0007744" key="15">
    <source>
        <dbReference type="PDB" id="6LSS"/>
    </source>
</evidence>
<evidence type="ECO:0007744" key="16">
    <source>
        <dbReference type="PDB" id="6LU8"/>
    </source>
</evidence>
<evidence type="ECO:0007744" key="17">
    <source>
    </source>
</evidence>
<evidence type="ECO:0007744" key="18">
    <source>
    </source>
</evidence>
<evidence type="ECO:0007744" key="19">
    <source>
    </source>
</evidence>
<dbReference type="EMBL" id="AF022229">
    <property type="protein sequence ID" value="AAB97735.1"/>
    <property type="molecule type" value="mRNA"/>
</dbReference>
<dbReference type="EMBL" id="Y11435">
    <property type="protein sequence ID" value="CAA72243.1"/>
    <property type="molecule type" value="mRNA"/>
</dbReference>
<dbReference type="EMBL" id="AF289541">
    <property type="protein sequence ID" value="AAK39426.1"/>
    <property type="molecule type" value="Genomic_DNA"/>
</dbReference>
<dbReference type="EMBL" id="AF289540">
    <property type="protein sequence ID" value="AAK39426.1"/>
    <property type="status" value="JOINED"/>
    <property type="molecule type" value="Genomic_DNA"/>
</dbReference>
<dbReference type="EMBL" id="AF047433">
    <property type="protein sequence ID" value="AAC39897.1"/>
    <property type="molecule type" value="mRNA"/>
</dbReference>
<dbReference type="EMBL" id="AK314969">
    <property type="protein sequence ID" value="BAG37470.1"/>
    <property type="molecule type" value="mRNA"/>
</dbReference>
<dbReference type="EMBL" id="AB062289">
    <property type="protein sequence ID" value="BAB93472.1"/>
    <property type="molecule type" value="mRNA"/>
</dbReference>
<dbReference type="EMBL" id="CR456764">
    <property type="protein sequence ID" value="CAG33045.1"/>
    <property type="molecule type" value="mRNA"/>
</dbReference>
<dbReference type="EMBL" id="AL121753">
    <property type="status" value="NOT_ANNOTATED_CDS"/>
    <property type="molecule type" value="Genomic_DNA"/>
</dbReference>
<dbReference type="EMBL" id="CH471077">
    <property type="protein sequence ID" value="EAW76221.1"/>
    <property type="molecule type" value="Genomic_DNA"/>
</dbReference>
<dbReference type="EMBL" id="BC001119">
    <property type="protein sequence ID" value="AAH01119.1"/>
    <property type="molecule type" value="mRNA"/>
</dbReference>
<dbReference type="EMBL" id="BC011845">
    <property type="protein sequence ID" value="AAH11845.1"/>
    <property type="molecule type" value="mRNA"/>
</dbReference>
<dbReference type="EMBL" id="BC019305">
    <property type="protein sequence ID" value="AAH19305.1"/>
    <property type="molecule type" value="mRNA"/>
</dbReference>
<dbReference type="CCDS" id="CCDS13249.1">
    <molecule id="P56537-1"/>
</dbReference>
<dbReference type="CCDS" id="CCDS13250.1">
    <molecule id="P56537-2"/>
</dbReference>
<dbReference type="RefSeq" id="NP_001254739.1">
    <molecule id="P56537-1"/>
    <property type="nucleotide sequence ID" value="NM_001267810.1"/>
</dbReference>
<dbReference type="RefSeq" id="NP_002203.1">
    <molecule id="P56537-1"/>
    <property type="nucleotide sequence ID" value="NM_002212.4"/>
</dbReference>
<dbReference type="RefSeq" id="NP_852131.1">
    <molecule id="P56537-2"/>
    <property type="nucleotide sequence ID" value="NM_181466.3"/>
</dbReference>
<dbReference type="RefSeq" id="NP_852133.1">
    <molecule id="P56537-1"/>
    <property type="nucleotide sequence ID" value="NM_181468.2"/>
</dbReference>
<dbReference type="PDB" id="6LQM">
    <property type="method" value="EM"/>
    <property type="resolution" value="3.09 A"/>
    <property type="chains" value="6=1-245"/>
</dbReference>
<dbReference type="PDB" id="6LSR">
    <property type="method" value="EM"/>
    <property type="resolution" value="3.13 A"/>
    <property type="chains" value="6=1-245"/>
</dbReference>
<dbReference type="PDB" id="6LSS">
    <property type="method" value="EM"/>
    <property type="resolution" value="3.23 A"/>
    <property type="chains" value="6=1-245"/>
</dbReference>
<dbReference type="PDB" id="6LU8">
    <property type="method" value="EM"/>
    <property type="resolution" value="3.13 A"/>
    <property type="chains" value="6=1-245"/>
</dbReference>
<dbReference type="PDB" id="7OW7">
    <property type="method" value="EM"/>
    <property type="resolution" value="2.20 A"/>
    <property type="chains" value="P=1-245"/>
</dbReference>
<dbReference type="PDB" id="8A3D">
    <property type="method" value="EM"/>
    <property type="resolution" value="1.67 A"/>
    <property type="chains" value="h=1-245"/>
</dbReference>
<dbReference type="PDB" id="8FKP">
    <property type="method" value="EM"/>
    <property type="resolution" value="2.85 A"/>
    <property type="chains" value="SK=1-245"/>
</dbReference>
<dbReference type="PDB" id="8FKQ">
    <property type="method" value="EM"/>
    <property type="resolution" value="2.76 A"/>
    <property type="chains" value="SK=1-245"/>
</dbReference>
<dbReference type="PDB" id="8FKR">
    <property type="method" value="EM"/>
    <property type="resolution" value="2.89 A"/>
    <property type="chains" value="SK=1-245"/>
</dbReference>
<dbReference type="PDB" id="8FKS">
    <property type="method" value="EM"/>
    <property type="resolution" value="2.88 A"/>
    <property type="chains" value="SK=1-245"/>
</dbReference>
<dbReference type="PDB" id="8FKT">
    <property type="method" value="EM"/>
    <property type="resolution" value="2.81 A"/>
    <property type="chains" value="SK=1-245"/>
</dbReference>
<dbReference type="PDB" id="8FKU">
    <property type="method" value="EM"/>
    <property type="resolution" value="2.82 A"/>
    <property type="chains" value="SK=1-245"/>
</dbReference>
<dbReference type="PDB" id="8FKV">
    <property type="method" value="EM"/>
    <property type="resolution" value="2.47 A"/>
    <property type="chains" value="SK=1-245"/>
</dbReference>
<dbReference type="PDB" id="8FKW">
    <property type="method" value="EM"/>
    <property type="resolution" value="2.50 A"/>
    <property type="chains" value="SK=1-245"/>
</dbReference>
<dbReference type="PDB" id="8FKX">
    <property type="method" value="EM"/>
    <property type="resolution" value="2.59 A"/>
    <property type="chains" value="SK=1-245"/>
</dbReference>
<dbReference type="PDB" id="8FKY">
    <property type="method" value="EM"/>
    <property type="resolution" value="2.67 A"/>
    <property type="chains" value="SK=1-245"/>
</dbReference>
<dbReference type="PDB" id="8FKZ">
    <property type="method" value="EM"/>
    <property type="resolution" value="3.04 A"/>
    <property type="chains" value="SK=1-245"/>
</dbReference>
<dbReference type="PDB" id="8FL0">
    <property type="method" value="EM"/>
    <property type="resolution" value="2.91 A"/>
    <property type="chains" value="SK=1-245"/>
</dbReference>
<dbReference type="PDB" id="8FL2">
    <property type="method" value="EM"/>
    <property type="resolution" value="2.67 A"/>
    <property type="chains" value="SK=1-245"/>
</dbReference>
<dbReference type="PDB" id="8FL3">
    <property type="method" value="EM"/>
    <property type="resolution" value="2.53 A"/>
    <property type="chains" value="SK=1-245"/>
</dbReference>
<dbReference type="PDB" id="8FL4">
    <property type="method" value="EM"/>
    <property type="resolution" value="2.89 A"/>
    <property type="chains" value="SK=1-245"/>
</dbReference>
<dbReference type="PDB" id="8FL6">
    <property type="method" value="EM"/>
    <property type="resolution" value="2.62 A"/>
    <property type="chains" value="SK=1-245"/>
</dbReference>
<dbReference type="PDB" id="8FL7">
    <property type="method" value="EM"/>
    <property type="resolution" value="2.55 A"/>
    <property type="chains" value="SK=1-245"/>
</dbReference>
<dbReference type="PDB" id="8FL9">
    <property type="method" value="EM"/>
    <property type="resolution" value="2.75 A"/>
    <property type="chains" value="SK=1-245"/>
</dbReference>
<dbReference type="PDB" id="8FLA">
    <property type="method" value="EM"/>
    <property type="resolution" value="2.63 A"/>
    <property type="chains" value="SK=1-245"/>
</dbReference>
<dbReference type="PDB" id="8FLB">
    <property type="method" value="EM"/>
    <property type="resolution" value="2.55 A"/>
    <property type="chains" value="SK=1-245"/>
</dbReference>
<dbReference type="PDB" id="8FLC">
    <property type="method" value="EM"/>
    <property type="resolution" value="2.76 A"/>
    <property type="chains" value="SK=1-245"/>
</dbReference>
<dbReference type="PDB" id="8FLD">
    <property type="method" value="EM"/>
    <property type="resolution" value="2.58 A"/>
    <property type="chains" value="SK=1-245"/>
</dbReference>
<dbReference type="PDB" id="8FLE">
    <property type="method" value="EM"/>
    <property type="resolution" value="2.48 A"/>
    <property type="chains" value="SK=1-245"/>
</dbReference>
<dbReference type="PDB" id="8FLF">
    <property type="method" value="EM"/>
    <property type="resolution" value="2.65 A"/>
    <property type="chains" value="SK=1-245"/>
</dbReference>
<dbReference type="PDB" id="8IDT">
    <property type="method" value="EM"/>
    <property type="resolution" value="2.80 A"/>
    <property type="chains" value="6=1-245"/>
</dbReference>
<dbReference type="PDB" id="8IDY">
    <property type="method" value="EM"/>
    <property type="resolution" value="3.00 A"/>
    <property type="chains" value="6=1-245"/>
</dbReference>
<dbReference type="PDB" id="8IE3">
    <property type="method" value="EM"/>
    <property type="resolution" value="3.30 A"/>
    <property type="chains" value="6=1-245"/>
</dbReference>
<dbReference type="PDB" id="8INE">
    <property type="method" value="EM"/>
    <property type="resolution" value="3.20 A"/>
    <property type="chains" value="6=1-245"/>
</dbReference>
<dbReference type="PDB" id="8INF">
    <property type="method" value="EM"/>
    <property type="resolution" value="3.00 A"/>
    <property type="chains" value="6=1-245"/>
</dbReference>
<dbReference type="PDB" id="8INK">
    <property type="method" value="EM"/>
    <property type="resolution" value="3.20 A"/>
    <property type="chains" value="6=1-245"/>
</dbReference>
<dbReference type="PDB" id="8IPD">
    <property type="method" value="EM"/>
    <property type="resolution" value="3.20 A"/>
    <property type="chains" value="6=1-245"/>
</dbReference>
<dbReference type="PDB" id="8IPX">
    <property type="method" value="EM"/>
    <property type="resolution" value="4.30 A"/>
    <property type="chains" value="6=1-245"/>
</dbReference>
<dbReference type="PDB" id="8IPY">
    <property type="method" value="EM"/>
    <property type="resolution" value="3.20 A"/>
    <property type="chains" value="6=1-245"/>
</dbReference>
<dbReference type="PDB" id="8IR1">
    <property type="method" value="EM"/>
    <property type="resolution" value="3.30 A"/>
    <property type="chains" value="6=1-245"/>
</dbReference>
<dbReference type="PDB" id="8IR3">
    <property type="method" value="EM"/>
    <property type="resolution" value="3.50 A"/>
    <property type="chains" value="6=1-245"/>
</dbReference>
<dbReference type="PDB" id="8OHD">
    <property type="method" value="EM"/>
    <property type="resolution" value="3.10 A"/>
    <property type="chains" value="K=1-245"/>
</dbReference>
<dbReference type="PDB" id="8OJ0">
    <property type="method" value="EM"/>
    <property type="resolution" value="3.30 A"/>
    <property type="chains" value="K=1-245"/>
</dbReference>
<dbReference type="PDB" id="8OJ8">
    <property type="method" value="EM"/>
    <property type="resolution" value="3.30 A"/>
    <property type="chains" value="K=1-245"/>
</dbReference>
<dbReference type="PDB" id="8RL2">
    <property type="method" value="EM"/>
    <property type="resolution" value="2.84 A"/>
    <property type="chains" value="CA=1-245"/>
</dbReference>
<dbReference type="PDB" id="9GMO">
    <property type="method" value="EM"/>
    <property type="resolution" value="2.59 A"/>
    <property type="chains" value="h=1-245"/>
</dbReference>
<dbReference type="PDBsum" id="6LQM"/>
<dbReference type="PDBsum" id="6LSR"/>
<dbReference type="PDBsum" id="6LSS"/>
<dbReference type="PDBsum" id="6LU8"/>
<dbReference type="PDBsum" id="7OW7"/>
<dbReference type="PDBsum" id="8A3D"/>
<dbReference type="PDBsum" id="8FKP"/>
<dbReference type="PDBsum" id="8FKQ"/>
<dbReference type="PDBsum" id="8FKR"/>
<dbReference type="PDBsum" id="8FKS"/>
<dbReference type="PDBsum" id="8FKT"/>
<dbReference type="PDBsum" id="8FKU"/>
<dbReference type="PDBsum" id="8FKV"/>
<dbReference type="PDBsum" id="8FKW"/>
<dbReference type="PDBsum" id="8FKX"/>
<dbReference type="PDBsum" id="8FKY"/>
<dbReference type="PDBsum" id="8FKZ"/>
<dbReference type="PDBsum" id="8FL0"/>
<dbReference type="PDBsum" id="8FL2"/>
<dbReference type="PDBsum" id="8FL3"/>
<dbReference type="PDBsum" id="8FL4"/>
<dbReference type="PDBsum" id="8FL6"/>
<dbReference type="PDBsum" id="8FL7"/>
<dbReference type="PDBsum" id="8FL9"/>
<dbReference type="PDBsum" id="8FLA"/>
<dbReference type="PDBsum" id="8FLB"/>
<dbReference type="PDBsum" id="8FLC"/>
<dbReference type="PDBsum" id="8FLD"/>
<dbReference type="PDBsum" id="8FLE"/>
<dbReference type="PDBsum" id="8FLF"/>
<dbReference type="PDBsum" id="8IDT"/>
<dbReference type="PDBsum" id="8IDY"/>
<dbReference type="PDBsum" id="8IE3"/>
<dbReference type="PDBsum" id="8INE"/>
<dbReference type="PDBsum" id="8INF"/>
<dbReference type="PDBsum" id="8INK"/>
<dbReference type="PDBsum" id="8IPD"/>
<dbReference type="PDBsum" id="8IPX"/>
<dbReference type="PDBsum" id="8IPY"/>
<dbReference type="PDBsum" id="8IR1"/>
<dbReference type="PDBsum" id="8IR3"/>
<dbReference type="PDBsum" id="8OHD"/>
<dbReference type="PDBsum" id="8OJ0"/>
<dbReference type="PDBsum" id="8OJ8"/>
<dbReference type="PDBsum" id="8RL2"/>
<dbReference type="PDBsum" id="9GMO"/>
<dbReference type="EMDB" id="EMD-0948"/>
<dbReference type="EMDB" id="EMD-0963"/>
<dbReference type="EMDB" id="EMD-0964"/>
<dbReference type="EMDB" id="EMD-0978"/>
<dbReference type="EMDB" id="EMD-13094"/>
<dbReference type="EMDB" id="EMD-15113"/>
<dbReference type="EMDB" id="EMD-16880"/>
<dbReference type="EMDB" id="EMD-16902"/>
<dbReference type="EMDB" id="EMD-16908"/>
<dbReference type="EMDB" id="EMD-19330"/>
<dbReference type="EMDB" id="EMD-29252"/>
<dbReference type="EMDB" id="EMD-29253"/>
<dbReference type="EMDB" id="EMD-29254"/>
<dbReference type="EMDB" id="EMD-29255"/>
<dbReference type="EMDB" id="EMD-29256"/>
<dbReference type="EMDB" id="EMD-29257"/>
<dbReference type="EMDB" id="EMD-29258"/>
<dbReference type="EMDB" id="EMD-29259"/>
<dbReference type="EMDB" id="EMD-29260"/>
<dbReference type="EMDB" id="EMD-29261"/>
<dbReference type="EMDB" id="EMD-29262"/>
<dbReference type="EMDB" id="EMD-29263"/>
<dbReference type="EMDB" id="EMD-29265"/>
<dbReference type="EMDB" id="EMD-29266"/>
<dbReference type="EMDB" id="EMD-29267"/>
<dbReference type="EMDB" id="EMD-29268"/>
<dbReference type="EMDB" id="EMD-29269"/>
<dbReference type="EMDB" id="EMD-29271"/>
<dbReference type="EMDB" id="EMD-29272"/>
<dbReference type="EMDB" id="EMD-29273"/>
<dbReference type="EMDB" id="EMD-29274"/>
<dbReference type="EMDB" id="EMD-29275"/>
<dbReference type="EMDB" id="EMD-29276"/>
<dbReference type="EMDB" id="EMD-29277"/>
<dbReference type="EMDB" id="EMD-35370"/>
<dbReference type="EMDB" id="EMD-35371"/>
<dbReference type="EMDB" id="EMD-35375"/>
<dbReference type="EMDB" id="EMD-35596"/>
<dbReference type="EMDB" id="EMD-35597"/>
<dbReference type="EMDB" id="EMD-35599"/>
<dbReference type="EMDB" id="EMD-35639"/>
<dbReference type="EMDB" id="EMD-35649"/>
<dbReference type="EMDB" id="EMD-35651"/>
<dbReference type="EMDB" id="EMD-35672"/>
<dbReference type="EMDB" id="EMD-35673"/>
<dbReference type="EMDB" id="EMD-51452"/>
<dbReference type="SMR" id="P56537"/>
<dbReference type="BioGRID" id="109898">
    <property type="interactions" value="371"/>
</dbReference>
<dbReference type="CORUM" id="P56537"/>
<dbReference type="FunCoup" id="P56537">
    <property type="interactions" value="2420"/>
</dbReference>
<dbReference type="IntAct" id="P56537">
    <property type="interactions" value="69"/>
</dbReference>
<dbReference type="MINT" id="P56537"/>
<dbReference type="STRING" id="9606.ENSP00000363559"/>
<dbReference type="ChEMBL" id="CHEMBL4296020"/>
<dbReference type="DrugBank" id="DB09130">
    <property type="generic name" value="Copper"/>
</dbReference>
<dbReference type="Allergome" id="8361">
    <property type="allergen name" value="Hom s eIF6"/>
</dbReference>
<dbReference type="GlyGen" id="P56537">
    <property type="glycosylation" value="2 sites, 1 O-linked glycan (2 sites)"/>
</dbReference>
<dbReference type="iPTMnet" id="P56537"/>
<dbReference type="MetOSite" id="P56537"/>
<dbReference type="PhosphoSitePlus" id="P56537"/>
<dbReference type="SwissPalm" id="P56537"/>
<dbReference type="BioMuta" id="EIF6"/>
<dbReference type="OGP" id="P56537"/>
<dbReference type="REPRODUCTION-2DPAGE" id="IPI00010105"/>
<dbReference type="jPOST" id="P56537"/>
<dbReference type="MassIVE" id="P56537"/>
<dbReference type="PaxDb" id="9606-ENSP00000363574"/>
<dbReference type="PeptideAtlas" id="P56537"/>
<dbReference type="ProteomicsDB" id="56921">
    <molecule id="P56537-1"/>
</dbReference>
<dbReference type="ProteomicsDB" id="7119"/>
<dbReference type="Pumba" id="P56537"/>
<dbReference type="TopDownProteomics" id="P56537-1">
    <molecule id="P56537-1"/>
</dbReference>
<dbReference type="Antibodypedia" id="35156">
    <property type="antibodies" value="263 antibodies from 35 providers"/>
</dbReference>
<dbReference type="DNASU" id="3692"/>
<dbReference type="Ensembl" id="ENST00000374436.7">
    <molecule id="P56537-1"/>
    <property type="protein sequence ID" value="ENSP00000363559.3"/>
    <property type="gene ID" value="ENSG00000242372.9"/>
</dbReference>
<dbReference type="Ensembl" id="ENST00000374443.7">
    <molecule id="P56537-2"/>
    <property type="protein sequence ID" value="ENSP00000363566.3"/>
    <property type="gene ID" value="ENSG00000242372.9"/>
</dbReference>
<dbReference type="Ensembl" id="ENST00000374450.8">
    <molecule id="P56537-1"/>
    <property type="protein sequence ID" value="ENSP00000363574.3"/>
    <property type="gene ID" value="ENSG00000242372.9"/>
</dbReference>
<dbReference type="Ensembl" id="ENST00000675032.1">
    <molecule id="P56537-1"/>
    <property type="protein sequence ID" value="ENSP00000502429.1"/>
    <property type="gene ID" value="ENSG00000242372.9"/>
</dbReference>
<dbReference type="GeneID" id="3692"/>
<dbReference type="KEGG" id="hsa:3692"/>
<dbReference type="MANE-Select" id="ENST00000374450.8">
    <property type="protein sequence ID" value="ENSP00000363574.3"/>
    <property type="RefSeq nucleotide sequence ID" value="NM_002212.4"/>
    <property type="RefSeq protein sequence ID" value="NP_002203.1"/>
</dbReference>
<dbReference type="UCSC" id="uc002xbv.3">
    <molecule id="P56537-1"/>
    <property type="organism name" value="human"/>
</dbReference>
<dbReference type="AGR" id="HGNC:6159"/>
<dbReference type="CTD" id="3692"/>
<dbReference type="DisGeNET" id="3692"/>
<dbReference type="GeneCards" id="EIF6"/>
<dbReference type="HGNC" id="HGNC:6159">
    <property type="gene designation" value="EIF6"/>
</dbReference>
<dbReference type="HPA" id="ENSG00000242372">
    <property type="expression patterns" value="Low tissue specificity"/>
</dbReference>
<dbReference type="MIM" id="602912">
    <property type="type" value="gene"/>
</dbReference>
<dbReference type="neXtProt" id="NX_P56537"/>
<dbReference type="OpenTargets" id="ENSG00000242372"/>
<dbReference type="PharmGKB" id="PA29958"/>
<dbReference type="VEuPathDB" id="HostDB:ENSG00000242372"/>
<dbReference type="eggNOG" id="KOG3185">
    <property type="taxonomic scope" value="Eukaryota"/>
</dbReference>
<dbReference type="GeneTree" id="ENSGT00390000015972"/>
<dbReference type="HOGENOM" id="CLU_071894_0_0_1"/>
<dbReference type="InParanoid" id="P56537"/>
<dbReference type="OMA" id="WCAFCGM"/>
<dbReference type="OrthoDB" id="4155914at2759"/>
<dbReference type="PAN-GO" id="P56537">
    <property type="GO annotations" value="8 GO annotations based on evolutionary models"/>
</dbReference>
<dbReference type="PhylomeDB" id="P56537"/>
<dbReference type="TreeFam" id="TF105396"/>
<dbReference type="PathwayCommons" id="P56537"/>
<dbReference type="SignaLink" id="P56537"/>
<dbReference type="SIGNOR" id="P56537"/>
<dbReference type="BioGRID-ORCS" id="3692">
    <property type="hits" value="817 hits in 1147 CRISPR screens"/>
</dbReference>
<dbReference type="CD-CODE" id="91857CE7">
    <property type="entry name" value="Nucleolus"/>
</dbReference>
<dbReference type="CD-CODE" id="DEE660B4">
    <property type="entry name" value="Stress granule"/>
</dbReference>
<dbReference type="ChiTaRS" id="EIF6">
    <property type="organism name" value="human"/>
</dbReference>
<dbReference type="GeneWiki" id="EIF6"/>
<dbReference type="GenomeRNAi" id="3692"/>
<dbReference type="Pharos" id="P56537">
    <property type="development level" value="Tbio"/>
</dbReference>
<dbReference type="PRO" id="PR:P56537"/>
<dbReference type="Proteomes" id="UP000005640">
    <property type="component" value="Chromosome 20"/>
</dbReference>
<dbReference type="RNAct" id="P56537">
    <property type="molecule type" value="protein"/>
</dbReference>
<dbReference type="Bgee" id="ENSG00000242372">
    <property type="expression patterns" value="Expressed in esophagus mucosa and 113 other cell types or tissues"/>
</dbReference>
<dbReference type="ExpressionAtlas" id="P56537">
    <property type="expression patterns" value="baseline and differential"/>
</dbReference>
<dbReference type="GO" id="GO:0005737">
    <property type="term" value="C:cytoplasm"/>
    <property type="evidence" value="ECO:0000314"/>
    <property type="project" value="UniProtKB"/>
</dbReference>
<dbReference type="GO" id="GO:0005829">
    <property type="term" value="C:cytosol"/>
    <property type="evidence" value="ECO:0000318"/>
    <property type="project" value="GO_Central"/>
</dbReference>
<dbReference type="GO" id="GO:0070062">
    <property type="term" value="C:extracellular exosome"/>
    <property type="evidence" value="ECO:0007005"/>
    <property type="project" value="UniProtKB"/>
</dbReference>
<dbReference type="GO" id="GO:0005638">
    <property type="term" value="C:lamin filament"/>
    <property type="evidence" value="ECO:0007669"/>
    <property type="project" value="Ensembl"/>
</dbReference>
<dbReference type="GO" id="GO:0005730">
    <property type="term" value="C:nucleolus"/>
    <property type="evidence" value="ECO:0007669"/>
    <property type="project" value="UniProtKB-SubCell"/>
</dbReference>
<dbReference type="GO" id="GO:0005654">
    <property type="term" value="C:nucleoplasm"/>
    <property type="evidence" value="ECO:0000314"/>
    <property type="project" value="HPA"/>
</dbReference>
<dbReference type="GO" id="GO:0005634">
    <property type="term" value="C:nucleus"/>
    <property type="evidence" value="ECO:0000314"/>
    <property type="project" value="UniProtKB"/>
</dbReference>
<dbReference type="GO" id="GO:0045202">
    <property type="term" value="C:synapse"/>
    <property type="evidence" value="ECO:0007669"/>
    <property type="project" value="Ensembl"/>
</dbReference>
<dbReference type="GO" id="GO:0043023">
    <property type="term" value="F:ribosomal large subunit binding"/>
    <property type="evidence" value="ECO:0000318"/>
    <property type="project" value="GO_Central"/>
</dbReference>
<dbReference type="GO" id="GO:0043022">
    <property type="term" value="F:ribosome binding"/>
    <property type="evidence" value="ECO:0000314"/>
    <property type="project" value="UniProtKB"/>
</dbReference>
<dbReference type="GO" id="GO:0003743">
    <property type="term" value="F:translation initiation factor activity"/>
    <property type="evidence" value="ECO:0007669"/>
    <property type="project" value="UniProtKB-UniRule"/>
</dbReference>
<dbReference type="GO" id="GO:1902626">
    <property type="term" value="P:assembly of large subunit precursor of preribosome"/>
    <property type="evidence" value="ECO:0000318"/>
    <property type="project" value="GO_Central"/>
</dbReference>
<dbReference type="GO" id="GO:0042256">
    <property type="term" value="P:cytosolic ribosome assembly"/>
    <property type="evidence" value="ECO:0000315"/>
    <property type="project" value="UniProtKB"/>
</dbReference>
<dbReference type="GO" id="GO:0000460">
    <property type="term" value="P:maturation of 5.8S rRNA"/>
    <property type="evidence" value="ECO:0000318"/>
    <property type="project" value="GO_Central"/>
</dbReference>
<dbReference type="GO" id="GO:0000470">
    <property type="term" value="P:maturation of LSU-rRNA"/>
    <property type="evidence" value="ECO:0000318"/>
    <property type="project" value="GO_Central"/>
</dbReference>
<dbReference type="GO" id="GO:0035278">
    <property type="term" value="P:miRNA-mediated gene silencing by inhibition of translation"/>
    <property type="evidence" value="ECO:0000315"/>
    <property type="project" value="UniProtKB"/>
</dbReference>
<dbReference type="GO" id="GO:0035195">
    <property type="term" value="P:miRNA-mediated post-transcriptional gene silencing"/>
    <property type="evidence" value="ECO:0000315"/>
    <property type="project" value="UniProtKB"/>
</dbReference>
<dbReference type="GO" id="GO:0045727">
    <property type="term" value="P:positive regulation of translation"/>
    <property type="evidence" value="ECO:0000250"/>
    <property type="project" value="UniProtKB"/>
</dbReference>
<dbReference type="GO" id="GO:0042304">
    <property type="term" value="P:regulation of fatty acid biosynthetic process"/>
    <property type="evidence" value="ECO:0000250"/>
    <property type="project" value="UniProtKB"/>
</dbReference>
<dbReference type="GO" id="GO:0006110">
    <property type="term" value="P:regulation of glycolytic process"/>
    <property type="evidence" value="ECO:0000250"/>
    <property type="project" value="UniProtKB"/>
</dbReference>
<dbReference type="GO" id="GO:0045652">
    <property type="term" value="P:regulation of megakaryocyte differentiation"/>
    <property type="evidence" value="ECO:0000250"/>
    <property type="project" value="UniProtKB"/>
</dbReference>
<dbReference type="GO" id="GO:2000377">
    <property type="term" value="P:regulation of reactive oxygen species metabolic process"/>
    <property type="evidence" value="ECO:0000250"/>
    <property type="project" value="UniProtKB"/>
</dbReference>
<dbReference type="GO" id="GO:0032868">
    <property type="term" value="P:response to insulin"/>
    <property type="evidence" value="ECO:0000250"/>
    <property type="project" value="UniProtKB"/>
</dbReference>
<dbReference type="GO" id="GO:0000054">
    <property type="term" value="P:ribosomal subunit export from nucleus"/>
    <property type="evidence" value="ECO:0000318"/>
    <property type="project" value="GO_Central"/>
</dbReference>
<dbReference type="CDD" id="cd00527">
    <property type="entry name" value="IF6"/>
    <property type="match status" value="1"/>
</dbReference>
<dbReference type="FunFam" id="3.75.10.10:FF:000001">
    <property type="entry name" value="Eukaryotic translation initiation factor 6"/>
    <property type="match status" value="1"/>
</dbReference>
<dbReference type="Gene3D" id="3.75.10.10">
    <property type="entry name" value="L-arginine/glycine Amidinotransferase, Chain A"/>
    <property type="match status" value="1"/>
</dbReference>
<dbReference type="HAMAP" id="MF_00032">
    <property type="entry name" value="eIF_6"/>
    <property type="match status" value="1"/>
</dbReference>
<dbReference type="InterPro" id="IPR002769">
    <property type="entry name" value="eIF6"/>
</dbReference>
<dbReference type="NCBIfam" id="TIGR00323">
    <property type="entry name" value="eIF-6"/>
    <property type="match status" value="1"/>
</dbReference>
<dbReference type="PANTHER" id="PTHR10784">
    <property type="entry name" value="TRANSLATION INITIATION FACTOR 6"/>
    <property type="match status" value="1"/>
</dbReference>
<dbReference type="Pfam" id="PF01912">
    <property type="entry name" value="eIF-6"/>
    <property type="match status" value="1"/>
</dbReference>
<dbReference type="PIRSF" id="PIRSF006413">
    <property type="entry name" value="IF-6"/>
    <property type="match status" value="1"/>
</dbReference>
<dbReference type="SMART" id="SM00654">
    <property type="entry name" value="eIF6"/>
    <property type="match status" value="1"/>
</dbReference>
<dbReference type="SUPFAM" id="SSF55909">
    <property type="entry name" value="Pentein"/>
    <property type="match status" value="1"/>
</dbReference>
<reference key="1">
    <citation type="journal article" date="1997" name="Proc. Natl. Acad. Sci. U.S.A.">
        <title>Molecular cloning and functional expression of a human cDNA encoding translation initiation factor 6.</title>
        <authorList>
            <person name="Si K."/>
            <person name="Chaudhuri J."/>
            <person name="Chevesich J."/>
            <person name="Maitra U."/>
        </authorList>
    </citation>
    <scope>NUCLEOTIDE SEQUENCE [MRNA] (ISOFORM 1)</scope>
    <source>
        <tissue>Skeletal muscle</tissue>
    </source>
</reference>
<reference key="2">
    <citation type="journal article" date="1997" name="J. Biol. Chem.">
        <title>Isolation of a novel beta4 integrin-binding protein (p27(BBP)) highly expressed in epithelial cells.</title>
        <authorList>
            <person name="Biffo S."/>
            <person name="Sanvito F."/>
            <person name="Costa S."/>
            <person name="Preve L."/>
            <person name="Pignatelli R."/>
            <person name="Spinardi L."/>
            <person name="Marchisio P.C."/>
        </authorList>
    </citation>
    <scope>NUCLEOTIDE SEQUENCE [MRNA] (ISOFORM 1)</scope>
    <source>
        <tissue>Placenta</tissue>
    </source>
</reference>
<reference key="3">
    <citation type="journal article" date="2001" name="Gene">
        <title>The human ITGB4BP gene is constitutively expressed in vitro, but highly modulated in vivo.</title>
        <authorList>
            <person name="Donadini A."/>
            <person name="Giodini A."/>
            <person name="Sanvito F."/>
            <person name="Marchisio P.C."/>
            <person name="Biffo S."/>
        </authorList>
    </citation>
    <scope>NUCLEOTIDE SEQUENCE [GENOMIC DNA]</scope>
    <scope>TISSUE SPECIFICITY</scope>
</reference>
<reference key="4">
    <citation type="journal article" date="1998" name="Proc. Natl. Acad. Sci. U.S.A.">
        <title>Identification of genes expressed in human CD34(+) hematopoietic stem/progenitor cells by expressed sequence tags and efficient full-length cDNA cloning.</title>
        <authorList>
            <person name="Mao M."/>
            <person name="Fu G."/>
            <person name="Wu J.-S."/>
            <person name="Zhang Q.-H."/>
            <person name="Zhou J."/>
            <person name="Kan L.-X."/>
            <person name="Huang Q.-H."/>
            <person name="He K.-L."/>
            <person name="Gu B.-W."/>
            <person name="Han Z.-G."/>
            <person name="Shen Y."/>
            <person name="Gu J."/>
            <person name="Yu Y.-P."/>
            <person name="Xu S.-H."/>
            <person name="Wang Y.-X."/>
            <person name="Chen S.-J."/>
            <person name="Chen Z."/>
        </authorList>
    </citation>
    <scope>NUCLEOTIDE SEQUENCE [LARGE SCALE MRNA] (ISOFORM 1)</scope>
    <source>
        <tissue>Umbilical cord blood</tissue>
    </source>
</reference>
<reference key="5">
    <citation type="journal article" date="2004" name="Nat. Genet.">
        <title>Complete sequencing and characterization of 21,243 full-length human cDNAs.</title>
        <authorList>
            <person name="Ota T."/>
            <person name="Suzuki Y."/>
            <person name="Nishikawa T."/>
            <person name="Otsuki T."/>
            <person name="Sugiyama T."/>
            <person name="Irie R."/>
            <person name="Wakamatsu A."/>
            <person name="Hayashi K."/>
            <person name="Sato H."/>
            <person name="Nagai K."/>
            <person name="Kimura K."/>
            <person name="Makita H."/>
            <person name="Sekine M."/>
            <person name="Obayashi M."/>
            <person name="Nishi T."/>
            <person name="Shibahara T."/>
            <person name="Tanaka T."/>
            <person name="Ishii S."/>
            <person name="Yamamoto J."/>
            <person name="Saito K."/>
            <person name="Kawai Y."/>
            <person name="Isono Y."/>
            <person name="Nakamura Y."/>
            <person name="Nagahari K."/>
            <person name="Murakami K."/>
            <person name="Yasuda T."/>
            <person name="Iwayanagi T."/>
            <person name="Wagatsuma M."/>
            <person name="Shiratori A."/>
            <person name="Sudo H."/>
            <person name="Hosoiri T."/>
            <person name="Kaku Y."/>
            <person name="Kodaira H."/>
            <person name="Kondo H."/>
            <person name="Sugawara M."/>
            <person name="Takahashi M."/>
            <person name="Kanda K."/>
            <person name="Yokoi T."/>
            <person name="Furuya T."/>
            <person name="Kikkawa E."/>
            <person name="Omura Y."/>
            <person name="Abe K."/>
            <person name="Kamihara K."/>
            <person name="Katsuta N."/>
            <person name="Sato K."/>
            <person name="Tanikawa M."/>
            <person name="Yamazaki M."/>
            <person name="Ninomiya K."/>
            <person name="Ishibashi T."/>
            <person name="Yamashita H."/>
            <person name="Murakawa K."/>
            <person name="Fujimori K."/>
            <person name="Tanai H."/>
            <person name="Kimata M."/>
            <person name="Watanabe M."/>
            <person name="Hiraoka S."/>
            <person name="Chiba Y."/>
            <person name="Ishida S."/>
            <person name="Ono Y."/>
            <person name="Takiguchi S."/>
            <person name="Watanabe S."/>
            <person name="Yosida M."/>
            <person name="Hotuta T."/>
            <person name="Kusano J."/>
            <person name="Kanehori K."/>
            <person name="Takahashi-Fujii A."/>
            <person name="Hara H."/>
            <person name="Tanase T.-O."/>
            <person name="Nomura Y."/>
            <person name="Togiya S."/>
            <person name="Komai F."/>
            <person name="Hara R."/>
            <person name="Takeuchi K."/>
            <person name="Arita M."/>
            <person name="Imose N."/>
            <person name="Musashino K."/>
            <person name="Yuuki H."/>
            <person name="Oshima A."/>
            <person name="Sasaki N."/>
            <person name="Aotsuka S."/>
            <person name="Yoshikawa Y."/>
            <person name="Matsunawa H."/>
            <person name="Ichihara T."/>
            <person name="Shiohata N."/>
            <person name="Sano S."/>
            <person name="Moriya S."/>
            <person name="Momiyama H."/>
            <person name="Satoh N."/>
            <person name="Takami S."/>
            <person name="Terashima Y."/>
            <person name="Suzuki O."/>
            <person name="Nakagawa S."/>
            <person name="Senoh A."/>
            <person name="Mizoguchi H."/>
            <person name="Goto Y."/>
            <person name="Shimizu F."/>
            <person name="Wakebe H."/>
            <person name="Hishigaki H."/>
            <person name="Watanabe T."/>
            <person name="Sugiyama A."/>
            <person name="Takemoto M."/>
            <person name="Kawakami B."/>
            <person name="Yamazaki M."/>
            <person name="Watanabe K."/>
            <person name="Kumagai A."/>
            <person name="Itakura S."/>
            <person name="Fukuzumi Y."/>
            <person name="Fujimori Y."/>
            <person name="Komiyama M."/>
            <person name="Tashiro H."/>
            <person name="Tanigami A."/>
            <person name="Fujiwara T."/>
            <person name="Ono T."/>
            <person name="Yamada K."/>
            <person name="Fujii Y."/>
            <person name="Ozaki K."/>
            <person name="Hirao M."/>
            <person name="Ohmori Y."/>
            <person name="Kawabata A."/>
            <person name="Hikiji T."/>
            <person name="Kobatake N."/>
            <person name="Inagaki H."/>
            <person name="Ikema Y."/>
            <person name="Okamoto S."/>
            <person name="Okitani R."/>
            <person name="Kawakami T."/>
            <person name="Noguchi S."/>
            <person name="Itoh T."/>
            <person name="Shigeta K."/>
            <person name="Senba T."/>
            <person name="Matsumura K."/>
            <person name="Nakajima Y."/>
            <person name="Mizuno T."/>
            <person name="Morinaga M."/>
            <person name="Sasaki M."/>
            <person name="Togashi T."/>
            <person name="Oyama M."/>
            <person name="Hata H."/>
            <person name="Watanabe M."/>
            <person name="Komatsu T."/>
            <person name="Mizushima-Sugano J."/>
            <person name="Satoh T."/>
            <person name="Shirai Y."/>
            <person name="Takahashi Y."/>
            <person name="Nakagawa K."/>
            <person name="Okumura K."/>
            <person name="Nagase T."/>
            <person name="Nomura N."/>
            <person name="Kikuchi H."/>
            <person name="Masuho Y."/>
            <person name="Yamashita R."/>
            <person name="Nakai K."/>
            <person name="Yada T."/>
            <person name="Nakamura Y."/>
            <person name="Ohara O."/>
            <person name="Isogai T."/>
            <person name="Sugano S."/>
        </authorList>
    </citation>
    <scope>NUCLEOTIDE SEQUENCE [LARGE SCALE MRNA] (ISOFORM 1)</scope>
    <source>
        <tissue>Placenta</tissue>
    </source>
</reference>
<reference key="6">
    <citation type="submission" date="2001-05" db="EMBL/GenBank/DDBJ databases">
        <title>Identification of immuno-peptidmics that are recognized by tumor-reactive CTL generated from TIL of colon cancer patients.</title>
        <authorList>
            <person name="Shichijo S."/>
            <person name="Itoh K."/>
        </authorList>
    </citation>
    <scope>NUCLEOTIDE SEQUENCE [LARGE SCALE MRNA] (ISOFORM 1)</scope>
    <source>
        <tissue>Colon adenocarcinoma</tissue>
    </source>
</reference>
<reference key="7">
    <citation type="submission" date="2004-06" db="EMBL/GenBank/DDBJ databases">
        <title>Cloning of human full open reading frames in Gateway(TM) system entry vector (pDONR201).</title>
        <authorList>
            <person name="Ebert L."/>
            <person name="Schick M."/>
            <person name="Neubert P."/>
            <person name="Schatten R."/>
            <person name="Henze S."/>
            <person name="Korn B."/>
        </authorList>
    </citation>
    <scope>NUCLEOTIDE SEQUENCE [LARGE SCALE MRNA] (ISOFORM 1)</scope>
</reference>
<reference key="8">
    <citation type="journal article" date="2001" name="Nature">
        <title>The DNA sequence and comparative analysis of human chromosome 20.</title>
        <authorList>
            <person name="Deloukas P."/>
            <person name="Matthews L.H."/>
            <person name="Ashurst J.L."/>
            <person name="Burton J."/>
            <person name="Gilbert J.G.R."/>
            <person name="Jones M."/>
            <person name="Stavrides G."/>
            <person name="Almeida J.P."/>
            <person name="Babbage A.K."/>
            <person name="Bagguley C.L."/>
            <person name="Bailey J."/>
            <person name="Barlow K.F."/>
            <person name="Bates K.N."/>
            <person name="Beard L.M."/>
            <person name="Beare D.M."/>
            <person name="Beasley O.P."/>
            <person name="Bird C.P."/>
            <person name="Blakey S.E."/>
            <person name="Bridgeman A.M."/>
            <person name="Brown A.J."/>
            <person name="Buck D."/>
            <person name="Burrill W.D."/>
            <person name="Butler A.P."/>
            <person name="Carder C."/>
            <person name="Carter N.P."/>
            <person name="Chapman J.C."/>
            <person name="Clamp M."/>
            <person name="Clark G."/>
            <person name="Clark L.N."/>
            <person name="Clark S.Y."/>
            <person name="Clee C.M."/>
            <person name="Clegg S."/>
            <person name="Cobley V.E."/>
            <person name="Collier R.E."/>
            <person name="Connor R.E."/>
            <person name="Corby N.R."/>
            <person name="Coulson A."/>
            <person name="Coville G.J."/>
            <person name="Deadman R."/>
            <person name="Dhami P.D."/>
            <person name="Dunn M."/>
            <person name="Ellington A.G."/>
            <person name="Frankland J.A."/>
            <person name="Fraser A."/>
            <person name="French L."/>
            <person name="Garner P."/>
            <person name="Grafham D.V."/>
            <person name="Griffiths C."/>
            <person name="Griffiths M.N.D."/>
            <person name="Gwilliam R."/>
            <person name="Hall R.E."/>
            <person name="Hammond S."/>
            <person name="Harley J.L."/>
            <person name="Heath P.D."/>
            <person name="Ho S."/>
            <person name="Holden J.L."/>
            <person name="Howden P.J."/>
            <person name="Huckle E."/>
            <person name="Hunt A.R."/>
            <person name="Hunt S.E."/>
            <person name="Jekosch K."/>
            <person name="Johnson C.M."/>
            <person name="Johnson D."/>
            <person name="Kay M.P."/>
            <person name="Kimberley A.M."/>
            <person name="King A."/>
            <person name="Knights A."/>
            <person name="Laird G.K."/>
            <person name="Lawlor S."/>
            <person name="Lehvaeslaiho M.H."/>
            <person name="Leversha M.A."/>
            <person name="Lloyd C."/>
            <person name="Lloyd D.M."/>
            <person name="Lovell J.D."/>
            <person name="Marsh V.L."/>
            <person name="Martin S.L."/>
            <person name="McConnachie L.J."/>
            <person name="McLay K."/>
            <person name="McMurray A.A."/>
            <person name="Milne S.A."/>
            <person name="Mistry D."/>
            <person name="Moore M.J.F."/>
            <person name="Mullikin J.C."/>
            <person name="Nickerson T."/>
            <person name="Oliver K."/>
            <person name="Parker A."/>
            <person name="Patel R."/>
            <person name="Pearce T.A.V."/>
            <person name="Peck A.I."/>
            <person name="Phillimore B.J.C.T."/>
            <person name="Prathalingam S.R."/>
            <person name="Plumb R.W."/>
            <person name="Ramsay H."/>
            <person name="Rice C.M."/>
            <person name="Ross M.T."/>
            <person name="Scott C.E."/>
            <person name="Sehra H.K."/>
            <person name="Shownkeen R."/>
            <person name="Sims S."/>
            <person name="Skuce C.D."/>
            <person name="Smith M.L."/>
            <person name="Soderlund C."/>
            <person name="Steward C.A."/>
            <person name="Sulston J.E."/>
            <person name="Swann R.M."/>
            <person name="Sycamore N."/>
            <person name="Taylor R."/>
            <person name="Tee L."/>
            <person name="Thomas D.W."/>
            <person name="Thorpe A."/>
            <person name="Tracey A."/>
            <person name="Tromans A.C."/>
            <person name="Vaudin M."/>
            <person name="Wall M."/>
            <person name="Wallis J.M."/>
            <person name="Whitehead S.L."/>
            <person name="Whittaker P."/>
            <person name="Willey D.L."/>
            <person name="Williams L."/>
            <person name="Williams S.A."/>
            <person name="Wilming L."/>
            <person name="Wray P.W."/>
            <person name="Hubbard T."/>
            <person name="Durbin R.M."/>
            <person name="Bentley D.R."/>
            <person name="Beck S."/>
            <person name="Rogers J."/>
        </authorList>
    </citation>
    <scope>NUCLEOTIDE SEQUENCE [LARGE SCALE GENOMIC DNA]</scope>
</reference>
<reference key="9">
    <citation type="submission" date="2005-09" db="EMBL/GenBank/DDBJ databases">
        <authorList>
            <person name="Mural R.J."/>
            <person name="Istrail S."/>
            <person name="Sutton G.G."/>
            <person name="Florea L."/>
            <person name="Halpern A.L."/>
            <person name="Mobarry C.M."/>
            <person name="Lippert R."/>
            <person name="Walenz B."/>
            <person name="Shatkay H."/>
            <person name="Dew I."/>
            <person name="Miller J.R."/>
            <person name="Flanigan M.J."/>
            <person name="Edwards N.J."/>
            <person name="Bolanos R."/>
            <person name="Fasulo D."/>
            <person name="Halldorsson B.V."/>
            <person name="Hannenhalli S."/>
            <person name="Turner R."/>
            <person name="Yooseph S."/>
            <person name="Lu F."/>
            <person name="Nusskern D.R."/>
            <person name="Shue B.C."/>
            <person name="Zheng X.H."/>
            <person name="Zhong F."/>
            <person name="Delcher A.L."/>
            <person name="Huson D.H."/>
            <person name="Kravitz S.A."/>
            <person name="Mouchard L."/>
            <person name="Reinert K."/>
            <person name="Remington K.A."/>
            <person name="Clark A.G."/>
            <person name="Waterman M.S."/>
            <person name="Eichler E.E."/>
            <person name="Adams M.D."/>
            <person name="Hunkapiller M.W."/>
            <person name="Myers E.W."/>
            <person name="Venter J.C."/>
        </authorList>
    </citation>
    <scope>NUCLEOTIDE SEQUENCE [LARGE SCALE GENOMIC DNA]</scope>
</reference>
<reference key="10">
    <citation type="journal article" date="2004" name="Genome Res.">
        <title>The status, quality, and expansion of the NIH full-length cDNA project: the Mammalian Gene Collection (MGC).</title>
        <authorList>
            <consortium name="The MGC Project Team"/>
        </authorList>
    </citation>
    <scope>NUCLEOTIDE SEQUENCE [LARGE SCALE MRNA] (ISOFORM 1)</scope>
    <source>
        <tissue>Lung</tissue>
        <tissue>Muscle</tissue>
        <tissue>Ovary</tissue>
    </source>
</reference>
<reference key="11">
    <citation type="journal article" date="1999" name="J. Cell Biol.">
        <title>The beta4 integrin interactor p27(BBP/eIF6) is an essential nuclear matrix protein involved in 60S ribosomal subunit assembly.</title>
        <authorList>
            <person name="Sanvito F."/>
            <person name="Piatti S."/>
            <person name="Villa A."/>
            <person name="Bossi M."/>
            <person name="Lucchini G."/>
            <person name="Marchisio P.C."/>
            <person name="Biffo S."/>
        </authorList>
    </citation>
    <scope>FUNCTION</scope>
    <scope>SUBCELLULAR LOCATION</scope>
</reference>
<reference key="12">
    <citation type="journal article" date="2003" name="Mol. Cell. Biol.">
        <title>Phosphorylation of mammalian eukaryotic translation initiation factor 6 and its Saccharomyces cerevisiae homologue Tif6p: evidence that phosphorylation of Tif6p regulates its nucleocytoplasmic distribution and is required for yeast cell growth.</title>
        <authorList>
            <person name="Basu U."/>
            <person name="Si K."/>
            <person name="Deng H."/>
            <person name="Maitra U."/>
        </authorList>
    </citation>
    <scope>PHOSPHORYLATION AT SER-174 AND SER-175</scope>
    <scope>SUBCELLULAR LOCATION</scope>
    <scope>NUCLEOCYTOPLASMIC SHUTTLING</scope>
</reference>
<reference key="13">
    <citation type="journal article" date="2003" name="Nature">
        <title>Release of eIF6 (p27BBP) from the 60S subunit allows 80S ribosome assembly.</title>
        <authorList>
            <person name="Ceci M."/>
            <person name="Gaviraghi C."/>
            <person name="Gorrini C."/>
            <person name="Sala L.A."/>
            <person name="Offenhauser N."/>
            <person name="Marchisio P.C."/>
            <person name="Biffo S."/>
        </authorList>
    </citation>
    <scope>FUNCTION</scope>
    <scope>SUBUNIT</scope>
    <scope>PHOSPHORYLATION AT SER-235</scope>
    <scope>INTERACTION WITH RACK1</scope>
</reference>
<reference key="14">
    <citation type="journal article" date="2005" name="Nat. Biotechnol.">
        <title>Immunoaffinity profiling of tyrosine phosphorylation in cancer cells.</title>
        <authorList>
            <person name="Rush J."/>
            <person name="Moritz A."/>
            <person name="Lee K.A."/>
            <person name="Guo A."/>
            <person name="Goss V.L."/>
            <person name="Spek E.J."/>
            <person name="Zhang H."/>
            <person name="Zha X.-M."/>
            <person name="Polakiewicz R.D."/>
            <person name="Comb M.J."/>
        </authorList>
    </citation>
    <scope>PHOSPHORYLATION [LARGE SCALE ANALYSIS] AT TYR-113</scope>
    <scope>IDENTIFICATION BY MASS SPECTROMETRY [LARGE SCALE ANALYSIS]</scope>
</reference>
<reference key="15">
    <citation type="journal article" date="2007" name="Nature">
        <title>MicroRNA silencing through RISC recruitment of eIF6.</title>
        <authorList>
            <person name="Chendrimada T.P."/>
            <person name="Finn K.J."/>
            <person name="Ji X."/>
            <person name="Baillat D."/>
            <person name="Gregory R.I."/>
            <person name="Liebhaber S.A."/>
            <person name="Pasquinelli A.E."/>
            <person name="Shiekhattar R."/>
        </authorList>
    </citation>
    <scope>FUNCTION</scope>
    <scope>INTERACTION WITH AGO2; DICER1; MOV10; RPL7A AND TARBP2</scope>
</reference>
<reference key="16">
    <citation type="journal article" date="2008" name="Proc. Natl. Acad. Sci. U.S.A.">
        <title>A quantitative atlas of mitotic phosphorylation.</title>
        <authorList>
            <person name="Dephoure N."/>
            <person name="Zhou C."/>
            <person name="Villen J."/>
            <person name="Beausoleil S.A."/>
            <person name="Bakalarski C.E."/>
            <person name="Elledge S.J."/>
            <person name="Gygi S.P."/>
        </authorList>
    </citation>
    <scope>PHOSPHORYLATION [LARGE SCALE ANALYSIS] AT SER-239 AND SER-243</scope>
    <scope>IDENTIFICATION BY MASS SPECTROMETRY [LARGE SCALE ANALYSIS]</scope>
    <source>
        <tissue>Cervix carcinoma</tissue>
    </source>
</reference>
<reference key="17">
    <citation type="journal article" date="2009" name="Sci. Signal.">
        <title>Quantitative phosphoproteomic analysis of T cell receptor signaling reveals system-wide modulation of protein-protein interactions.</title>
        <authorList>
            <person name="Mayya V."/>
            <person name="Lundgren D.H."/>
            <person name="Hwang S.-I."/>
            <person name="Rezaul K."/>
            <person name="Wu L."/>
            <person name="Eng J.K."/>
            <person name="Rodionov V."/>
            <person name="Han D.K."/>
        </authorList>
    </citation>
    <scope>IDENTIFICATION BY MASS SPECTROMETRY [LARGE SCALE ANALYSIS]</scope>
    <source>
        <tissue>Leukemic T-cell</tissue>
    </source>
</reference>
<reference key="18">
    <citation type="journal article" date="2010" name="Sci. Signal.">
        <title>Quantitative phosphoproteomics reveals widespread full phosphorylation site occupancy during mitosis.</title>
        <authorList>
            <person name="Olsen J.V."/>
            <person name="Vermeulen M."/>
            <person name="Santamaria A."/>
            <person name="Kumar C."/>
            <person name="Miller M.L."/>
            <person name="Jensen L.J."/>
            <person name="Gnad F."/>
            <person name="Cox J."/>
            <person name="Jensen T.S."/>
            <person name="Nigg E.A."/>
            <person name="Brunak S."/>
            <person name="Mann M."/>
        </authorList>
    </citation>
    <scope>PHOSPHORYLATION [LARGE SCALE ANALYSIS] AT SER-239</scope>
    <scope>IDENTIFICATION BY MASS SPECTROMETRY [LARGE SCALE ANALYSIS]</scope>
    <source>
        <tissue>Cervix carcinoma</tissue>
    </source>
</reference>
<reference key="19">
    <citation type="journal article" date="2011" name="BMC Syst. Biol.">
        <title>Initial characterization of the human central proteome.</title>
        <authorList>
            <person name="Burkard T.R."/>
            <person name="Planyavsky M."/>
            <person name="Kaupe I."/>
            <person name="Breitwieser F.P."/>
            <person name="Buerckstuemmer T."/>
            <person name="Bennett K.L."/>
            <person name="Superti-Furga G."/>
            <person name="Colinge J."/>
        </authorList>
    </citation>
    <scope>IDENTIFICATION BY MASS SPECTROMETRY [LARGE SCALE ANALYSIS]</scope>
</reference>
<reference key="20">
    <citation type="journal article" date="2011" name="Genes Dev.">
        <title>Uncoupling of GTP hydrolysis from eIF6 release on the ribosome causes Shwachman-Diamond syndrome.</title>
        <authorList>
            <person name="Finch A.J."/>
            <person name="Hilcenko C."/>
            <person name="Basse N."/>
            <person name="Drynan L.F."/>
            <person name="Goyenechea B."/>
            <person name="Menne T.F."/>
            <person name="Gonzalez Fernandez A."/>
            <person name="Simpson P."/>
            <person name="D'Santos C.S."/>
            <person name="Arends M.J."/>
            <person name="Donadieu J."/>
            <person name="Bellanne-Chantelot C."/>
            <person name="Costanzo M."/>
            <person name="Boone C."/>
            <person name="McKenzie A.N."/>
            <person name="Freund S.M."/>
            <person name="Warren A.J."/>
        </authorList>
    </citation>
    <scope>FUNCTION</scope>
</reference>
<reference key="21">
    <citation type="journal article" date="2011" name="J. Biol. Chem.">
        <title>Opposing action of casein kinase 1 and calcineurin in nucleo-cytoplasmic shuttling of mammalian translation initiation factor eIF6.</title>
        <authorList>
            <person name="Biswas A."/>
            <person name="Mukherjee S."/>
            <person name="Das S."/>
            <person name="Shields D."/>
            <person name="Chow C.W."/>
            <person name="Maitra U."/>
        </authorList>
    </citation>
    <scope>PHOSPHORYLATION AT SER-174 AND SER-175 BY CSNK1D/CK1</scope>
    <scope>SUBCELLULAR LOCATION</scope>
</reference>
<reference key="22">
    <citation type="journal article" date="2014" name="J. Proteomics">
        <title>An enzyme assisted RP-RPLC approach for in-depth analysis of human liver phosphoproteome.</title>
        <authorList>
            <person name="Bian Y."/>
            <person name="Song C."/>
            <person name="Cheng K."/>
            <person name="Dong M."/>
            <person name="Wang F."/>
            <person name="Huang J."/>
            <person name="Sun D."/>
            <person name="Wang L."/>
            <person name="Ye M."/>
            <person name="Zou H."/>
        </authorList>
    </citation>
    <scope>IDENTIFICATION BY MASS SPECTROMETRY [LARGE SCALE ANALYSIS]</scope>
    <source>
        <tissue>Liver</tissue>
    </source>
</reference>
<reference key="23">
    <citation type="journal article" date="2015" name="Proteomics">
        <title>N-terminome analysis of the human mitochondrial proteome.</title>
        <authorList>
            <person name="Vaca Jacome A.S."/>
            <person name="Rabilloud T."/>
            <person name="Schaeffer-Reiss C."/>
            <person name="Rompais M."/>
            <person name="Ayoub D."/>
            <person name="Lane L."/>
            <person name="Bairoch A."/>
            <person name="Van Dorsselaer A."/>
            <person name="Carapito C."/>
        </authorList>
    </citation>
    <scope>IDENTIFICATION BY MASS SPECTROMETRY [LARGE SCALE ANALYSIS]</scope>
</reference>
<reference evidence="13 14 15 16" key="24">
    <citation type="journal article" date="2020" name="Nat. Commun.">
        <title>Structural snapshots of human pre-60S ribosomal particles before and after nuclear export.</title>
        <authorList>
            <person name="Liang X."/>
            <person name="Zuo M.Q."/>
            <person name="Zhang Y."/>
            <person name="Li N."/>
            <person name="Ma C."/>
            <person name="Dong M.Q."/>
            <person name="Gao N."/>
        </authorList>
    </citation>
    <scope>STRUCTURE BY ELECTRON MICROSCOPY (3.09 ANGSTROMS) IN COMPLEX WITH THE 60S RIBOSOME</scope>
    <scope>FUNCTION</scope>
</reference>
<protein>
    <recommendedName>
        <fullName evidence="2">Eukaryotic translation initiation factor 6</fullName>
        <shortName evidence="2">eIF-6</shortName>
    </recommendedName>
    <alternativeName>
        <fullName>B(2)GCN homolog</fullName>
    </alternativeName>
    <alternativeName>
        <fullName>B4 integrin interactor</fullName>
    </alternativeName>
    <alternativeName>
        <fullName>CAB</fullName>
    </alternativeName>
    <alternativeName>
        <fullName>p27(BBP)</fullName>
    </alternativeName>
</protein>
<feature type="chain" id="PRO_0000153734" description="Eukaryotic translation initiation factor 6">
    <location>
        <begin position="1"/>
        <end position="245"/>
    </location>
</feature>
<feature type="modified residue" description="Phosphotyrosine" evidence="17">
    <location>
        <position position="113"/>
    </location>
</feature>
<feature type="modified residue" description="Phosphothreonine" evidence="1 2">
    <location>
        <position position="165"/>
    </location>
</feature>
<feature type="modified residue" description="Phosphoserine" evidence="1 2">
    <location>
        <position position="166"/>
    </location>
</feature>
<feature type="modified residue" description="Phosphoserine; by CK1" evidence="2 5 8">
    <location>
        <position position="174"/>
    </location>
</feature>
<feature type="modified residue" description="Phosphoserine; by CK1" evidence="2 5 8">
    <location>
        <position position="175"/>
    </location>
</feature>
<feature type="modified residue" description="Phosphoserine; by PKC" evidence="2 6">
    <location>
        <position position="235"/>
    </location>
</feature>
<feature type="modified residue" description="Phosphoserine" evidence="18 19">
    <location>
        <position position="239"/>
    </location>
</feature>
<feature type="modified residue" description="Phosphoserine" evidence="18">
    <location>
        <position position="243"/>
    </location>
</feature>
<feature type="splice variant" id="VSP_046747" description="In isoform 2." evidence="11">
    <original>SVFEGELSDTIPVVHASIAGCRIIGRMCVGNRHGLLVPNNTTDQELQHIRNSLPDTVQIRRVEERLSALGNVTTCNDYVALVHPDLDR</original>
    <variation>RCGGSPGAYGGGEACAGVKSSGSGRVPAPLPRHHRVHVPTVCSRASSPIPSPWCTRLSPAAASSGACVW</variation>
    <location>
        <begin position="36"/>
        <end position="123"/>
    </location>
</feature>
<feature type="sequence conflict" description="In Ref. 3; AAK39426." evidence="11" ref="3">
    <location>
        <begin position="35"/>
        <end position="36"/>
    </location>
</feature>
<keyword id="KW-0002">3D-structure</keyword>
<keyword id="KW-0025">Alternative splicing</keyword>
<keyword id="KW-0963">Cytoplasm</keyword>
<keyword id="KW-0396">Initiation factor</keyword>
<keyword id="KW-0539">Nucleus</keyword>
<keyword id="KW-0597">Phosphoprotein</keyword>
<keyword id="KW-0648">Protein biosynthesis</keyword>
<keyword id="KW-1267">Proteomics identification</keyword>
<keyword id="KW-1185">Reference proteome</keyword>
<keyword id="KW-0690">Ribosome biogenesis</keyword>
<keyword id="KW-0832">Ubl conjugation</keyword>
<sequence length="245" mass="26599">MAVRASFENNCEIGCFAKLTNTYCLVAIGGSENFYSVFEGELSDTIPVVHASIAGCRIIGRMCVGNRHGLLVPNNTTDQELQHIRNSLPDTVQIRRVEERLSALGNVTTCNDYVALVHPDLDRETEEILADVLKVEVFRQTVADQVLVGSYCVFSNQGGLVHPKTSIEDQDELSSLLQVPLVAGTVNRGSEVIAAGMVVNDWCAFCGLDTTSTELSVVESVFKLNEAQPSTIATSMRDSLIDSLT</sequence>
<accession>P56537</accession>
<accession>B7ZBG9</accession>
<accession>Q6IBN8</accession>
<accession>Q96TD5</accession>
<organism>
    <name type="scientific">Homo sapiens</name>
    <name type="common">Human</name>
    <dbReference type="NCBI Taxonomy" id="9606"/>
    <lineage>
        <taxon>Eukaryota</taxon>
        <taxon>Metazoa</taxon>
        <taxon>Chordata</taxon>
        <taxon>Craniata</taxon>
        <taxon>Vertebrata</taxon>
        <taxon>Euteleostomi</taxon>
        <taxon>Mammalia</taxon>
        <taxon>Eutheria</taxon>
        <taxon>Euarchontoglires</taxon>
        <taxon>Primates</taxon>
        <taxon>Haplorrhini</taxon>
        <taxon>Catarrhini</taxon>
        <taxon>Hominidae</taxon>
        <taxon>Homo</taxon>
    </lineage>
</organism>
<gene>
    <name evidence="2 12" type="primary">EIF6</name>
    <name type="synonym">EIF3A</name>
    <name evidence="2" type="synonym">ITGB4BP</name>
    <name type="ORF">OK/SW-cl.27</name>
</gene>
<name>IF6_HUMAN</name>
<comment type="function">
    <text evidence="2 3 6 7 9 10">Binds to the 60S ribosomal subunit and prevents its association with the 40S ribosomal subunit to form the 80S initiation complex in the cytoplasm (PubMed:10085284, PubMed:14654845, PubMed:21536732, PubMed:32669547). Behaves as a stimulatory translation initiation factor downstream insulin/growth factors. Is also involved in ribosome biogenesis. Associates with pre-60S subunits in the nucleus and is involved in its nuclear export. Cytoplasmic release of TIF6 from 60S subunits and nuclear relocalization is promoted by a RACK1 (RACK1)-dependent protein kinase C activity (PubMed:10085284, PubMed:14654845, PubMed:21536732). In tissues responsive to insulin, controls fatty acid synthesis and glycolysis by exerting translational control of adipogenic transcription factors such as CEBPB, CEBPD and ATF4 that have G/C rich or uORF in their 5'UTR. Required for ROS-dependent megakaryocyte maturation and platelets formation, controls the expression of mitochondrial respiratory chain genes involved in reactive oxygen species (ROS) synthesis (By similarity). Involved in miRNA-mediated gene silencing by the RNA-induced silencing complex (RISC). Required for both miRNA-mediated translational repression and miRNA-mediated cleavage of complementary mRNAs by RISC (PubMed:17507929). Modulates cell cycle progression and global translation of pre-B cells, its activation seems to be rate-limiting in tumorigenesis and tumor growth (By similarity).</text>
</comment>
<comment type="subunit">
    <text evidence="2 6 7">Monomer. Associates with the 60S ribosomal subunit. Interacts with RACK1. Interacts with DICER1, AGO2, TARBP2, MOV10 and RPL7A; they form a large RNA-induced silencing complex (RISC) (PubMed:17507929).</text>
</comment>
<comment type="interaction">
    <interactant intactId="EBI-372243">
        <id>P56537</id>
    </interactant>
    <interactant intactId="EBI-744193">
        <id>Q96C10</id>
        <label>DHX58</label>
    </interactant>
    <organismsDiffer>false</organismsDiffer>
    <experiments>2</experiments>
</comment>
<comment type="interaction">
    <interactant intactId="EBI-372243">
        <id>P56537</id>
    </interactant>
    <interactant intactId="EBI-640775">
        <id>P19525</id>
        <label>EIF2AK2</label>
    </interactant>
    <organismsDiffer>false</organismsDiffer>
    <experiments>2</experiments>
</comment>
<comment type="interaction">
    <interactant intactId="EBI-372243">
        <id>P56537</id>
    </interactant>
    <interactant intactId="EBI-16439278">
        <id>Q6FHY5</id>
        <label>MEOX2</label>
    </interactant>
    <organismsDiffer>false</organismsDiffer>
    <experiments>3</experiments>
</comment>
<comment type="interaction">
    <interactant intactId="EBI-372243">
        <id>P56537</id>
    </interactant>
    <interactant intactId="EBI-10699187">
        <id>Q8IXL7-2</id>
        <label>MSRB3</label>
    </interactant>
    <organismsDiffer>false</organismsDiffer>
    <experiments>3</experiments>
</comment>
<comment type="interaction">
    <interactant intactId="EBI-372243">
        <id>P56537</id>
    </interactant>
    <interactant intactId="EBI-718657">
        <id>Q16612</id>
        <label>NREP</label>
    </interactant>
    <organismsDiffer>false</organismsDiffer>
    <experiments>5</experiments>
</comment>
<comment type="interaction">
    <interactant intactId="EBI-372243">
        <id>P56537</id>
    </interactant>
    <interactant intactId="EBI-6115729">
        <id>Q9Y6K5</id>
        <label>OAS3</label>
    </interactant>
    <organismsDiffer>false</organismsDiffer>
    <experiments>2</experiments>
</comment>
<comment type="interaction">
    <interactant intactId="EBI-372243">
        <id>P56537</id>
    </interactant>
    <interactant intactId="EBI-2107455">
        <id>Q08AM6</id>
        <label>VAC14</label>
    </interactant>
    <organismsDiffer>false</organismsDiffer>
    <experiments>3</experiments>
</comment>
<comment type="interaction">
    <interactant intactId="EBI-372243">
        <id>P56537</id>
    </interactant>
    <interactant intactId="EBI-397048">
        <id>P68404</id>
        <label>Prkcb</label>
    </interactant>
    <organismsDiffer>true</organismsDiffer>
    <experiments>2</experiments>
</comment>
<comment type="subcellular location">
    <subcellularLocation>
        <location>Cytoplasm</location>
    </subcellularLocation>
    <subcellularLocation>
        <location>Nucleus</location>
        <location>Nucleolus</location>
    </subcellularLocation>
    <text>Shuttles between cytoplasm and nucleus/nucleolus.</text>
</comment>
<comment type="alternative products">
    <event type="alternative splicing"/>
    <isoform>
        <id>P56537-1</id>
        <name>1</name>
        <sequence type="displayed"/>
    </isoform>
    <isoform>
        <id>P56537-2</id>
        <name>2</name>
        <sequence type="described" ref="VSP_046747"/>
    </isoform>
</comment>
<comment type="tissue specificity">
    <text evidence="4">Expressed at very high levels in colon carcinoma with lower levels in normal colon and ileum and lowest levels in kidney and muscle (at protein level).</text>
</comment>
<comment type="PTM">
    <text evidence="5 6 8">Phosphorylation at Ser-174 and Ser-175 by CSNK1D/CK1 promotes nuclear export.</text>
</comment>
<comment type="PTM">
    <text evidence="1">Ufmylated by UFL1.</text>
</comment>
<comment type="similarity">
    <text evidence="2">Belongs to the eIF-6 family.</text>
</comment>